<accession>C1DJG1</accession>
<name>ARGA_AZOVD</name>
<evidence type="ECO:0000255" key="1">
    <source>
        <dbReference type="HAMAP-Rule" id="MF_01105"/>
    </source>
</evidence>
<reference key="1">
    <citation type="journal article" date="2009" name="J. Bacteriol.">
        <title>Genome sequence of Azotobacter vinelandii, an obligate aerobe specialized to support diverse anaerobic metabolic processes.</title>
        <authorList>
            <person name="Setubal J.C."/>
            <person name="Dos Santos P."/>
            <person name="Goldman B.S."/>
            <person name="Ertesvaag H."/>
            <person name="Espin G."/>
            <person name="Rubio L.M."/>
            <person name="Valla S."/>
            <person name="Almeida N.F."/>
            <person name="Balasubramanian D."/>
            <person name="Cromes L."/>
            <person name="Curatti L."/>
            <person name="Du Z."/>
            <person name="Godsy E."/>
            <person name="Goodner B."/>
            <person name="Hellner-Burris K."/>
            <person name="Hernandez J.A."/>
            <person name="Houmiel K."/>
            <person name="Imperial J."/>
            <person name="Kennedy C."/>
            <person name="Larson T.J."/>
            <person name="Latreille P."/>
            <person name="Ligon L.S."/>
            <person name="Lu J."/>
            <person name="Maerk M."/>
            <person name="Miller N.M."/>
            <person name="Norton S."/>
            <person name="O'Carroll I.P."/>
            <person name="Paulsen I."/>
            <person name="Raulfs E.C."/>
            <person name="Roemer R."/>
            <person name="Rosser J."/>
            <person name="Segura D."/>
            <person name="Slater S."/>
            <person name="Stricklin S.L."/>
            <person name="Studholme D.J."/>
            <person name="Sun J."/>
            <person name="Viana C.J."/>
            <person name="Wallin E."/>
            <person name="Wang B."/>
            <person name="Wheeler C."/>
            <person name="Zhu H."/>
            <person name="Dean D.R."/>
            <person name="Dixon R."/>
            <person name="Wood D."/>
        </authorList>
    </citation>
    <scope>NUCLEOTIDE SEQUENCE [LARGE SCALE GENOMIC DNA]</scope>
    <source>
        <strain>DJ / ATCC BAA-1303</strain>
    </source>
</reference>
<feature type="chain" id="PRO_1000213557" description="Amino-acid acetyltransferase">
    <location>
        <begin position="1"/>
        <end position="432"/>
    </location>
</feature>
<feature type="domain" description="N-acetyltransferase" evidence="1">
    <location>
        <begin position="286"/>
        <end position="425"/>
    </location>
</feature>
<gene>
    <name evidence="1" type="primary">argA</name>
    <name type="ordered locus">Avin_04920</name>
</gene>
<comment type="catalytic activity">
    <reaction evidence="1">
        <text>L-glutamate + acetyl-CoA = N-acetyl-L-glutamate + CoA + H(+)</text>
        <dbReference type="Rhea" id="RHEA:24292"/>
        <dbReference type="ChEBI" id="CHEBI:15378"/>
        <dbReference type="ChEBI" id="CHEBI:29985"/>
        <dbReference type="ChEBI" id="CHEBI:44337"/>
        <dbReference type="ChEBI" id="CHEBI:57287"/>
        <dbReference type="ChEBI" id="CHEBI:57288"/>
        <dbReference type="EC" id="2.3.1.1"/>
    </reaction>
</comment>
<comment type="pathway">
    <text evidence="1">Amino-acid biosynthesis; L-arginine biosynthesis; N(2)-acetyl-L-ornithine from L-glutamate: step 1/4.</text>
</comment>
<comment type="subcellular location">
    <subcellularLocation>
        <location evidence="1">Cytoplasm</location>
    </subcellularLocation>
</comment>
<comment type="similarity">
    <text evidence="1">Belongs to the acetyltransferase family. ArgA subfamily.</text>
</comment>
<sequence>MRDYVNWLRHASPYINAHRDCTFVVMLPGEGIEHPNFGNIVHDLVLLHSLGVRLVLVHGSRPQIEARLAARGLTPRFHQNLRITDVPTLECVIDAVGSLRLAIEARLSMDMAASPMQGARLRVVGGNFVTARPIGVVDGIDYLHTGEVRRIDRKGIGRQLDERAIVLLSPLGYSPTGEIFNLACEDVATRAAIDLKADKLLLFGAEPGLLDGQGTLIRELRPQQVAAHLERLGADYQGELLDAAAQACRAGVPRSHMVSYAEDGALLTELFTRDGGGTLVTQEQFEKLREATIEDVGGLLELIRPLEEQGILVRRSREVLEREIGQFSIVERDGLIIACAALYPIADSDAGELACLAVNPDYRHGGRGDELLERIEARARALGLKTLFVLTTRTAHWFRERGFQPSGVERLPAARASLYNYQRQSKVFEKAL</sequence>
<keyword id="KW-0012">Acyltransferase</keyword>
<keyword id="KW-0028">Amino-acid biosynthesis</keyword>
<keyword id="KW-0055">Arginine biosynthesis</keyword>
<keyword id="KW-0963">Cytoplasm</keyword>
<keyword id="KW-0808">Transferase</keyword>
<proteinExistence type="inferred from homology"/>
<dbReference type="EC" id="2.3.1.1" evidence="1"/>
<dbReference type="EMBL" id="CP001157">
    <property type="protein sequence ID" value="ACO76746.1"/>
    <property type="molecule type" value="Genomic_DNA"/>
</dbReference>
<dbReference type="RefSeq" id="WP_012699174.1">
    <property type="nucleotide sequence ID" value="NC_012560.1"/>
</dbReference>
<dbReference type="SMR" id="C1DJG1"/>
<dbReference type="STRING" id="322710.Avin_04920"/>
<dbReference type="EnsemblBacteria" id="ACO76746">
    <property type="protein sequence ID" value="ACO76746"/>
    <property type="gene ID" value="Avin_04920"/>
</dbReference>
<dbReference type="GeneID" id="88183917"/>
<dbReference type="KEGG" id="avn:Avin_04920"/>
<dbReference type="eggNOG" id="COG0548">
    <property type="taxonomic scope" value="Bacteria"/>
</dbReference>
<dbReference type="eggNOG" id="COG1246">
    <property type="taxonomic scope" value="Bacteria"/>
</dbReference>
<dbReference type="HOGENOM" id="CLU_024773_0_0_6"/>
<dbReference type="OrthoDB" id="9802238at2"/>
<dbReference type="UniPathway" id="UPA00068">
    <property type="reaction ID" value="UER00106"/>
</dbReference>
<dbReference type="Proteomes" id="UP000002424">
    <property type="component" value="Chromosome"/>
</dbReference>
<dbReference type="GO" id="GO:0005737">
    <property type="term" value="C:cytoplasm"/>
    <property type="evidence" value="ECO:0007669"/>
    <property type="project" value="UniProtKB-SubCell"/>
</dbReference>
<dbReference type="GO" id="GO:0004042">
    <property type="term" value="F:L-glutamate N-acetyltransferase activity"/>
    <property type="evidence" value="ECO:0007669"/>
    <property type="project" value="UniProtKB-UniRule"/>
</dbReference>
<dbReference type="GO" id="GO:0006526">
    <property type="term" value="P:L-arginine biosynthetic process"/>
    <property type="evidence" value="ECO:0007669"/>
    <property type="project" value="UniProtKB-UniRule"/>
</dbReference>
<dbReference type="CDD" id="cd04237">
    <property type="entry name" value="AAK_NAGS-ABP"/>
    <property type="match status" value="1"/>
</dbReference>
<dbReference type="CDD" id="cd04301">
    <property type="entry name" value="NAT_SF"/>
    <property type="match status" value="1"/>
</dbReference>
<dbReference type="FunFam" id="3.40.630.30:FF:000009">
    <property type="entry name" value="Amino-acid acetyltransferase"/>
    <property type="match status" value="1"/>
</dbReference>
<dbReference type="Gene3D" id="3.40.630.30">
    <property type="match status" value="1"/>
</dbReference>
<dbReference type="Gene3D" id="3.40.1160.10">
    <property type="entry name" value="Acetylglutamate kinase-like"/>
    <property type="match status" value="1"/>
</dbReference>
<dbReference type="HAMAP" id="MF_01105">
    <property type="entry name" value="N_acetyl_glu_synth"/>
    <property type="match status" value="1"/>
</dbReference>
<dbReference type="InterPro" id="IPR036393">
    <property type="entry name" value="AceGlu_kinase-like_sf"/>
</dbReference>
<dbReference type="InterPro" id="IPR016181">
    <property type="entry name" value="Acyl_CoA_acyltransferase"/>
</dbReference>
<dbReference type="InterPro" id="IPR001048">
    <property type="entry name" value="Asp/Glu/Uridylate_kinase"/>
</dbReference>
<dbReference type="InterPro" id="IPR000182">
    <property type="entry name" value="GNAT_dom"/>
</dbReference>
<dbReference type="InterPro" id="IPR033719">
    <property type="entry name" value="NAGS_kin"/>
</dbReference>
<dbReference type="InterPro" id="IPR010167">
    <property type="entry name" value="NH2A_AcTrfase"/>
</dbReference>
<dbReference type="NCBIfam" id="TIGR01890">
    <property type="entry name" value="N-Ac-Glu-synth"/>
    <property type="match status" value="1"/>
</dbReference>
<dbReference type="NCBIfam" id="NF003641">
    <property type="entry name" value="PRK05279.1"/>
    <property type="match status" value="1"/>
</dbReference>
<dbReference type="PANTHER" id="PTHR30602">
    <property type="entry name" value="AMINO-ACID ACETYLTRANSFERASE"/>
    <property type="match status" value="1"/>
</dbReference>
<dbReference type="PANTHER" id="PTHR30602:SF12">
    <property type="entry name" value="AMINO-ACID ACETYLTRANSFERASE NAGS1, CHLOROPLASTIC-RELATED"/>
    <property type="match status" value="1"/>
</dbReference>
<dbReference type="Pfam" id="PF00696">
    <property type="entry name" value="AA_kinase"/>
    <property type="match status" value="1"/>
</dbReference>
<dbReference type="Pfam" id="PF00583">
    <property type="entry name" value="Acetyltransf_1"/>
    <property type="match status" value="1"/>
</dbReference>
<dbReference type="PIRSF" id="PIRSF000423">
    <property type="entry name" value="ArgA"/>
    <property type="match status" value="1"/>
</dbReference>
<dbReference type="SUPFAM" id="SSF55729">
    <property type="entry name" value="Acyl-CoA N-acyltransferases (Nat)"/>
    <property type="match status" value="1"/>
</dbReference>
<dbReference type="SUPFAM" id="SSF53633">
    <property type="entry name" value="Carbamate kinase-like"/>
    <property type="match status" value="1"/>
</dbReference>
<dbReference type="PROSITE" id="PS51186">
    <property type="entry name" value="GNAT"/>
    <property type="match status" value="1"/>
</dbReference>
<protein>
    <recommendedName>
        <fullName evidence="1">Amino-acid acetyltransferase</fullName>
        <ecNumber evidence="1">2.3.1.1</ecNumber>
    </recommendedName>
    <alternativeName>
        <fullName evidence="1">N-acetylglutamate synthase</fullName>
        <shortName evidence="1">AGS</shortName>
        <shortName evidence="1">NAGS</shortName>
    </alternativeName>
</protein>
<organism>
    <name type="scientific">Azotobacter vinelandii (strain DJ / ATCC BAA-1303)</name>
    <dbReference type="NCBI Taxonomy" id="322710"/>
    <lineage>
        <taxon>Bacteria</taxon>
        <taxon>Pseudomonadati</taxon>
        <taxon>Pseudomonadota</taxon>
        <taxon>Gammaproteobacteria</taxon>
        <taxon>Pseudomonadales</taxon>
        <taxon>Pseudomonadaceae</taxon>
        <taxon>Azotobacter</taxon>
    </lineage>
</organism>